<gene>
    <name evidence="1" type="primary">acpP</name>
    <name type="ordered locus">NWMN_1142</name>
</gene>
<sequence>MENFDKVKDIIVDRLGVDADKVTEDASFKDDLGADSLDIAELVMELEDEFGTEIPDEEAEKINTVGDAVKFINSLEK</sequence>
<protein>
    <recommendedName>
        <fullName evidence="1">Acyl carrier protein</fullName>
        <shortName evidence="1">ACP</shortName>
    </recommendedName>
</protein>
<dbReference type="EMBL" id="AP009351">
    <property type="protein sequence ID" value="BAF67414.1"/>
    <property type="molecule type" value="Genomic_DNA"/>
</dbReference>
<dbReference type="RefSeq" id="WP_000426914.1">
    <property type="nucleotide sequence ID" value="NZ_JBBIAE010000001.1"/>
</dbReference>
<dbReference type="SMR" id="A6QGD2"/>
<dbReference type="KEGG" id="sae:NWMN_1142"/>
<dbReference type="HOGENOM" id="CLU_108696_5_1_9"/>
<dbReference type="UniPathway" id="UPA00094"/>
<dbReference type="Proteomes" id="UP000006386">
    <property type="component" value="Chromosome"/>
</dbReference>
<dbReference type="GO" id="GO:0005829">
    <property type="term" value="C:cytosol"/>
    <property type="evidence" value="ECO:0007669"/>
    <property type="project" value="TreeGrafter"/>
</dbReference>
<dbReference type="GO" id="GO:0016020">
    <property type="term" value="C:membrane"/>
    <property type="evidence" value="ECO:0007669"/>
    <property type="project" value="GOC"/>
</dbReference>
<dbReference type="GO" id="GO:0000035">
    <property type="term" value="F:acyl binding"/>
    <property type="evidence" value="ECO:0007669"/>
    <property type="project" value="TreeGrafter"/>
</dbReference>
<dbReference type="GO" id="GO:0000036">
    <property type="term" value="F:acyl carrier activity"/>
    <property type="evidence" value="ECO:0007669"/>
    <property type="project" value="UniProtKB-UniRule"/>
</dbReference>
<dbReference type="GO" id="GO:0009245">
    <property type="term" value="P:lipid A biosynthetic process"/>
    <property type="evidence" value="ECO:0007669"/>
    <property type="project" value="TreeGrafter"/>
</dbReference>
<dbReference type="FunFam" id="1.10.1200.10:FF:000001">
    <property type="entry name" value="Acyl carrier protein"/>
    <property type="match status" value="1"/>
</dbReference>
<dbReference type="Gene3D" id="1.10.1200.10">
    <property type="entry name" value="ACP-like"/>
    <property type="match status" value="1"/>
</dbReference>
<dbReference type="HAMAP" id="MF_01217">
    <property type="entry name" value="Acyl_carrier"/>
    <property type="match status" value="1"/>
</dbReference>
<dbReference type="InterPro" id="IPR003231">
    <property type="entry name" value="ACP"/>
</dbReference>
<dbReference type="InterPro" id="IPR036736">
    <property type="entry name" value="ACP-like_sf"/>
</dbReference>
<dbReference type="InterPro" id="IPR009081">
    <property type="entry name" value="PP-bd_ACP"/>
</dbReference>
<dbReference type="InterPro" id="IPR006162">
    <property type="entry name" value="Ppantetheine_attach_site"/>
</dbReference>
<dbReference type="NCBIfam" id="TIGR00517">
    <property type="entry name" value="acyl_carrier"/>
    <property type="match status" value="1"/>
</dbReference>
<dbReference type="NCBIfam" id="NF002148">
    <property type="entry name" value="PRK00982.1-2"/>
    <property type="match status" value="1"/>
</dbReference>
<dbReference type="NCBIfam" id="NF002150">
    <property type="entry name" value="PRK00982.1-4"/>
    <property type="match status" value="1"/>
</dbReference>
<dbReference type="NCBIfam" id="NF002151">
    <property type="entry name" value="PRK00982.1-5"/>
    <property type="match status" value="1"/>
</dbReference>
<dbReference type="PANTHER" id="PTHR20863">
    <property type="entry name" value="ACYL CARRIER PROTEIN"/>
    <property type="match status" value="1"/>
</dbReference>
<dbReference type="PANTHER" id="PTHR20863:SF76">
    <property type="entry name" value="CARRIER DOMAIN-CONTAINING PROTEIN"/>
    <property type="match status" value="1"/>
</dbReference>
<dbReference type="Pfam" id="PF00550">
    <property type="entry name" value="PP-binding"/>
    <property type="match status" value="1"/>
</dbReference>
<dbReference type="SUPFAM" id="SSF47336">
    <property type="entry name" value="ACP-like"/>
    <property type="match status" value="1"/>
</dbReference>
<dbReference type="PROSITE" id="PS50075">
    <property type="entry name" value="CARRIER"/>
    <property type="match status" value="1"/>
</dbReference>
<dbReference type="PROSITE" id="PS00012">
    <property type="entry name" value="PHOSPHOPANTETHEINE"/>
    <property type="match status" value="1"/>
</dbReference>
<proteinExistence type="inferred from homology"/>
<feature type="chain" id="PRO_1000073126" description="Acyl carrier protein">
    <location>
        <begin position="1"/>
        <end position="77"/>
    </location>
</feature>
<feature type="domain" description="Carrier" evidence="2">
    <location>
        <begin position="1"/>
        <end position="76"/>
    </location>
</feature>
<feature type="modified residue" description="O-(pantetheine 4'-phosphoryl)serine" evidence="2">
    <location>
        <position position="36"/>
    </location>
</feature>
<reference key="1">
    <citation type="journal article" date="2008" name="J. Bacteriol.">
        <title>Genome sequence of Staphylococcus aureus strain Newman and comparative analysis of staphylococcal genomes: polymorphism and evolution of two major pathogenicity islands.</title>
        <authorList>
            <person name="Baba T."/>
            <person name="Bae T."/>
            <person name="Schneewind O."/>
            <person name="Takeuchi F."/>
            <person name="Hiramatsu K."/>
        </authorList>
    </citation>
    <scope>NUCLEOTIDE SEQUENCE [LARGE SCALE GENOMIC DNA]</scope>
    <source>
        <strain>Newman</strain>
    </source>
</reference>
<keyword id="KW-0963">Cytoplasm</keyword>
<keyword id="KW-0275">Fatty acid biosynthesis</keyword>
<keyword id="KW-0276">Fatty acid metabolism</keyword>
<keyword id="KW-0444">Lipid biosynthesis</keyword>
<keyword id="KW-0443">Lipid metabolism</keyword>
<keyword id="KW-0596">Phosphopantetheine</keyword>
<keyword id="KW-0597">Phosphoprotein</keyword>
<comment type="function">
    <text evidence="1">Carrier of the growing fatty acid chain in fatty acid biosynthesis.</text>
</comment>
<comment type="pathway">
    <text evidence="1">Lipid metabolism; fatty acid biosynthesis.</text>
</comment>
<comment type="subcellular location">
    <subcellularLocation>
        <location evidence="1">Cytoplasm</location>
    </subcellularLocation>
</comment>
<comment type="PTM">
    <text evidence="1">4'-phosphopantetheine is transferred from CoA to a specific serine of apo-ACP by AcpS. This modification is essential for activity because fatty acids are bound in thioester linkage to the sulfhydryl of the prosthetic group.</text>
</comment>
<comment type="similarity">
    <text evidence="1">Belongs to the acyl carrier protein (ACP) family.</text>
</comment>
<organism>
    <name type="scientific">Staphylococcus aureus (strain Newman)</name>
    <dbReference type="NCBI Taxonomy" id="426430"/>
    <lineage>
        <taxon>Bacteria</taxon>
        <taxon>Bacillati</taxon>
        <taxon>Bacillota</taxon>
        <taxon>Bacilli</taxon>
        <taxon>Bacillales</taxon>
        <taxon>Staphylococcaceae</taxon>
        <taxon>Staphylococcus</taxon>
    </lineage>
</organism>
<evidence type="ECO:0000255" key="1">
    <source>
        <dbReference type="HAMAP-Rule" id="MF_01217"/>
    </source>
</evidence>
<evidence type="ECO:0000255" key="2">
    <source>
        <dbReference type="PROSITE-ProRule" id="PRU00258"/>
    </source>
</evidence>
<name>ACP_STAAE</name>
<accession>A6QGD2</accession>